<protein>
    <recommendedName>
        <fullName>Homeobox-leucine zipper protein HOX32</fullName>
    </recommendedName>
    <alternativeName>
        <fullName>HD-ZIP protein HOX32</fullName>
    </alternativeName>
    <alternativeName>
        <fullName>Homeodomain transcription factor HOX32</fullName>
    </alternativeName>
    <alternativeName>
        <fullName>OsHox32</fullName>
    </alternativeName>
</protein>
<reference key="1">
    <citation type="journal article" date="2005" name="Genome Res.">
        <title>Sequence, annotation, and analysis of synteny between rice chromosome 3 and diverged grass species.</title>
        <authorList>
            <consortium name="The rice chromosome 3 sequencing consortium"/>
            <person name="Buell C.R."/>
            <person name="Yuan Q."/>
            <person name="Ouyang S."/>
            <person name="Liu J."/>
            <person name="Zhu W."/>
            <person name="Wang A."/>
            <person name="Maiti R."/>
            <person name="Haas B."/>
            <person name="Wortman J."/>
            <person name="Pertea M."/>
            <person name="Jones K.M."/>
            <person name="Kim M."/>
            <person name="Overton L."/>
            <person name="Tsitrin T."/>
            <person name="Fadrosh D."/>
            <person name="Bera J."/>
            <person name="Weaver B."/>
            <person name="Jin S."/>
            <person name="Johri S."/>
            <person name="Reardon M."/>
            <person name="Webb K."/>
            <person name="Hill J."/>
            <person name="Moffat K."/>
            <person name="Tallon L."/>
            <person name="Van Aken S."/>
            <person name="Lewis M."/>
            <person name="Utterback T."/>
            <person name="Feldblyum T."/>
            <person name="Zismann V."/>
            <person name="Iobst S."/>
            <person name="Hsiao J."/>
            <person name="de Vazeille A.R."/>
            <person name="Salzberg S.L."/>
            <person name="White O."/>
            <person name="Fraser C.M."/>
            <person name="Yu Y."/>
            <person name="Kim H."/>
            <person name="Rambo T."/>
            <person name="Currie J."/>
            <person name="Collura K."/>
            <person name="Kernodle-Thompson S."/>
            <person name="Wei F."/>
            <person name="Kudrna K."/>
            <person name="Ammiraju J.S.S."/>
            <person name="Luo M."/>
            <person name="Goicoechea J.L."/>
            <person name="Wing R.A."/>
            <person name="Henry D."/>
            <person name="Oates R."/>
            <person name="Palmer M."/>
            <person name="Pries G."/>
            <person name="Saski C."/>
            <person name="Simmons J."/>
            <person name="Soderlund C."/>
            <person name="Nelson W."/>
            <person name="de la Bastide M."/>
            <person name="Spiegel L."/>
            <person name="Nascimento L."/>
            <person name="Huang E."/>
            <person name="Preston R."/>
            <person name="Zutavern T."/>
            <person name="Palmer L."/>
            <person name="O'Shaughnessy A."/>
            <person name="Dike S."/>
            <person name="McCombie W.R."/>
            <person name="Minx P."/>
            <person name="Cordum H."/>
            <person name="Wilson R."/>
            <person name="Jin W."/>
            <person name="Lee H.R."/>
            <person name="Jiang J."/>
            <person name="Jackson S."/>
        </authorList>
    </citation>
    <scope>NUCLEOTIDE SEQUENCE [LARGE SCALE GENOMIC DNA]</scope>
    <source>
        <strain>cv. Nipponbare</strain>
    </source>
</reference>
<reference key="2">
    <citation type="journal article" date="2005" name="Nature">
        <title>The map-based sequence of the rice genome.</title>
        <authorList>
            <consortium name="International rice genome sequencing project (IRGSP)"/>
        </authorList>
    </citation>
    <scope>NUCLEOTIDE SEQUENCE [LARGE SCALE GENOMIC DNA]</scope>
    <source>
        <strain>cv. Nipponbare</strain>
    </source>
</reference>
<reference key="3">
    <citation type="journal article" date="2008" name="Nucleic Acids Res.">
        <title>The rice annotation project database (RAP-DB): 2008 update.</title>
        <authorList>
            <consortium name="The rice annotation project (RAP)"/>
        </authorList>
    </citation>
    <scope>GENOME REANNOTATION</scope>
    <source>
        <strain>cv. Nipponbare</strain>
    </source>
</reference>
<reference key="4">
    <citation type="journal article" date="2013" name="Rice">
        <title>Improvement of the Oryza sativa Nipponbare reference genome using next generation sequence and optical map data.</title>
        <authorList>
            <person name="Kawahara Y."/>
            <person name="de la Bastide M."/>
            <person name="Hamilton J.P."/>
            <person name="Kanamori H."/>
            <person name="McCombie W.R."/>
            <person name="Ouyang S."/>
            <person name="Schwartz D.C."/>
            <person name="Tanaka T."/>
            <person name="Wu J."/>
            <person name="Zhou S."/>
            <person name="Childs K.L."/>
            <person name="Davidson R.M."/>
            <person name="Lin H."/>
            <person name="Quesada-Ocampo L."/>
            <person name="Vaillancourt B."/>
            <person name="Sakai H."/>
            <person name="Lee S.S."/>
            <person name="Kim J."/>
            <person name="Numa H."/>
            <person name="Itoh T."/>
            <person name="Buell C.R."/>
            <person name="Matsumoto T."/>
        </authorList>
    </citation>
    <scope>GENOME REANNOTATION</scope>
    <source>
        <strain>cv. Nipponbare</strain>
    </source>
</reference>
<reference key="5">
    <citation type="journal article" date="2003" name="Science">
        <title>Collection, mapping, and annotation of over 28,000 cDNA clones from japonica rice.</title>
        <authorList>
            <consortium name="The rice full-length cDNA consortium"/>
        </authorList>
    </citation>
    <scope>NUCLEOTIDE SEQUENCE [LARGE SCALE MRNA]</scope>
    <source>
        <strain>cv. Nipponbare</strain>
    </source>
</reference>
<reference key="6">
    <citation type="journal article" date="2008" name="Plant Mol. Biol.">
        <title>A genome-wide survey of HD-Zip genes in rice and analysis of drought-responsive family members.</title>
        <authorList>
            <person name="Agalou A."/>
            <person name="Purwantomo S."/>
            <person name="Oevernaes E."/>
            <person name="Johannesson H."/>
            <person name="Zhu X."/>
            <person name="Estiati A."/>
            <person name="de Kam R.J."/>
            <person name="Engstroem P."/>
            <person name="Slamet-Loedin I.H."/>
            <person name="Zhu Z."/>
            <person name="Wang M."/>
            <person name="Xiong L."/>
            <person name="Meijer A.H."/>
            <person name="Ouwerkerk P.B.F."/>
        </authorList>
    </citation>
    <scope>NUCLEOTIDE SEQUENCE [MRNA] OF 513-644</scope>
    <scope>TISSUE SPECIFICITY</scope>
    <scope>GENE FAMILY</scope>
    <scope>NOMENCLATURE</scope>
    <source>
        <strain>cv. Nipponbare</strain>
    </source>
</reference>
<evidence type="ECO:0000250" key="1"/>
<evidence type="ECO:0000255" key="2"/>
<evidence type="ECO:0000255" key="3">
    <source>
        <dbReference type="PROSITE-ProRule" id="PRU00108"/>
    </source>
</evidence>
<evidence type="ECO:0000255" key="4">
    <source>
        <dbReference type="PROSITE-ProRule" id="PRU00197"/>
    </source>
</evidence>
<evidence type="ECO:0000256" key="5">
    <source>
        <dbReference type="SAM" id="MobiDB-lite"/>
    </source>
</evidence>
<evidence type="ECO:0000269" key="6">
    <source>
    </source>
</evidence>
<evidence type="ECO:0000305" key="7"/>
<organism>
    <name type="scientific">Oryza sativa subsp. japonica</name>
    <name type="common">Rice</name>
    <dbReference type="NCBI Taxonomy" id="39947"/>
    <lineage>
        <taxon>Eukaryota</taxon>
        <taxon>Viridiplantae</taxon>
        <taxon>Streptophyta</taxon>
        <taxon>Embryophyta</taxon>
        <taxon>Tracheophyta</taxon>
        <taxon>Spermatophyta</taxon>
        <taxon>Magnoliopsida</taxon>
        <taxon>Liliopsida</taxon>
        <taxon>Poales</taxon>
        <taxon>Poaceae</taxon>
        <taxon>BOP clade</taxon>
        <taxon>Oryzoideae</taxon>
        <taxon>Oryzeae</taxon>
        <taxon>Oryzinae</taxon>
        <taxon>Oryza</taxon>
        <taxon>Oryza sativa</taxon>
    </lineage>
</organism>
<keyword id="KW-0175">Coiled coil</keyword>
<keyword id="KW-0238">DNA-binding</keyword>
<keyword id="KW-0371">Homeobox</keyword>
<keyword id="KW-0539">Nucleus</keyword>
<keyword id="KW-1185">Reference proteome</keyword>
<keyword id="KW-0804">Transcription</keyword>
<keyword id="KW-0805">Transcription regulation</keyword>
<name>HOX32_ORYSJ</name>
<proteinExistence type="evidence at transcript level"/>
<dbReference type="EMBL" id="AC147427">
    <property type="protein sequence ID" value="AAT85280.1"/>
    <property type="molecule type" value="Genomic_DNA"/>
</dbReference>
<dbReference type="EMBL" id="DP000009">
    <property type="protein sequence ID" value="ABF97828.1"/>
    <property type="molecule type" value="Genomic_DNA"/>
</dbReference>
<dbReference type="EMBL" id="AP008209">
    <property type="protein sequence ID" value="BAF12659.1"/>
    <property type="molecule type" value="Genomic_DNA"/>
</dbReference>
<dbReference type="EMBL" id="AP014959">
    <property type="protein sequence ID" value="BAS85427.1"/>
    <property type="molecule type" value="Genomic_DNA"/>
</dbReference>
<dbReference type="EMBL" id="AK103284">
    <property type="protein sequence ID" value="BAG95992.1"/>
    <property type="molecule type" value="mRNA"/>
</dbReference>
<dbReference type="EMBL" id="AY559044">
    <property type="protein sequence ID" value="AAS68136.1"/>
    <property type="molecule type" value="Genomic_DNA"/>
</dbReference>
<dbReference type="RefSeq" id="XP_015632484.1">
    <property type="nucleotide sequence ID" value="XM_015776998.1"/>
</dbReference>
<dbReference type="SMR" id="Q6AST1"/>
<dbReference type="FunCoup" id="Q6AST1">
    <property type="interactions" value="1463"/>
</dbReference>
<dbReference type="STRING" id="39947.Q6AST1"/>
<dbReference type="PaxDb" id="39947-Q6AST1"/>
<dbReference type="EnsemblPlants" id="Os03t0640800-01">
    <property type="protein sequence ID" value="Os03t0640800-01"/>
    <property type="gene ID" value="Os03g0640800"/>
</dbReference>
<dbReference type="Gramene" id="Os03t0640800-01">
    <property type="protein sequence ID" value="Os03t0640800-01"/>
    <property type="gene ID" value="Os03g0640800"/>
</dbReference>
<dbReference type="KEGG" id="dosa:Os03g0640800"/>
<dbReference type="eggNOG" id="ENOG502QPKR">
    <property type="taxonomic scope" value="Eukaryota"/>
</dbReference>
<dbReference type="HOGENOM" id="CLU_012517_0_0_1"/>
<dbReference type="InParanoid" id="Q6AST1"/>
<dbReference type="OMA" id="ADPNGCN"/>
<dbReference type="OrthoDB" id="125004at2759"/>
<dbReference type="Proteomes" id="UP000000763">
    <property type="component" value="Chromosome 3"/>
</dbReference>
<dbReference type="Proteomes" id="UP000059680">
    <property type="component" value="Chromosome 3"/>
</dbReference>
<dbReference type="ExpressionAtlas" id="Q6AST1">
    <property type="expression patterns" value="baseline and differential"/>
</dbReference>
<dbReference type="GO" id="GO:0005634">
    <property type="term" value="C:nucleus"/>
    <property type="evidence" value="ECO:0007669"/>
    <property type="project" value="UniProtKB-SubCell"/>
</dbReference>
<dbReference type="GO" id="GO:0003677">
    <property type="term" value="F:DNA binding"/>
    <property type="evidence" value="ECO:0007669"/>
    <property type="project" value="UniProtKB-KW"/>
</dbReference>
<dbReference type="GO" id="GO:0003700">
    <property type="term" value="F:DNA-binding transcription factor activity"/>
    <property type="evidence" value="ECO:0007669"/>
    <property type="project" value="InterPro"/>
</dbReference>
<dbReference type="GO" id="GO:0008289">
    <property type="term" value="F:lipid binding"/>
    <property type="evidence" value="ECO:0007669"/>
    <property type="project" value="InterPro"/>
</dbReference>
<dbReference type="CDD" id="cd14686">
    <property type="entry name" value="bZIP"/>
    <property type="match status" value="1"/>
</dbReference>
<dbReference type="CDD" id="cd00086">
    <property type="entry name" value="homeodomain"/>
    <property type="match status" value="1"/>
</dbReference>
<dbReference type="CDD" id="cd08875">
    <property type="entry name" value="START_ArGLABRA2_like"/>
    <property type="match status" value="1"/>
</dbReference>
<dbReference type="FunFam" id="1.10.10.60:FF:000197">
    <property type="entry name" value="Homeobox-leucine zipper protein REVOLUTA"/>
    <property type="match status" value="1"/>
</dbReference>
<dbReference type="Gene3D" id="3.30.530.20">
    <property type="match status" value="1"/>
</dbReference>
<dbReference type="Gene3D" id="1.10.10.60">
    <property type="entry name" value="Homeodomain-like"/>
    <property type="match status" value="1"/>
</dbReference>
<dbReference type="InterPro" id="IPR001356">
    <property type="entry name" value="HD"/>
</dbReference>
<dbReference type="InterPro" id="IPR044830">
    <property type="entry name" value="HD-Zip_III"/>
</dbReference>
<dbReference type="InterPro" id="IPR009057">
    <property type="entry name" value="Homeodomain-like_sf"/>
</dbReference>
<dbReference type="InterPro" id="IPR013978">
    <property type="entry name" value="MEKHLA"/>
</dbReference>
<dbReference type="InterPro" id="IPR023393">
    <property type="entry name" value="START-like_dom_sf"/>
</dbReference>
<dbReference type="InterPro" id="IPR002913">
    <property type="entry name" value="START_lipid-bd_dom"/>
</dbReference>
<dbReference type="PANTHER" id="PTHR45950">
    <property type="entry name" value="HOMEOBOX-LEUCINE ZIPPER PROTEIN ATHB-14"/>
    <property type="match status" value="1"/>
</dbReference>
<dbReference type="PANTHER" id="PTHR45950:SF7">
    <property type="entry name" value="HOMEOBOX-LEUCINE ZIPPER PROTEIN ATHB-14"/>
    <property type="match status" value="1"/>
</dbReference>
<dbReference type="Pfam" id="PF00046">
    <property type="entry name" value="Homeodomain"/>
    <property type="match status" value="1"/>
</dbReference>
<dbReference type="Pfam" id="PF08670">
    <property type="entry name" value="MEKHLA"/>
    <property type="match status" value="1"/>
</dbReference>
<dbReference type="Pfam" id="PF01852">
    <property type="entry name" value="START"/>
    <property type="match status" value="1"/>
</dbReference>
<dbReference type="SMART" id="SM00389">
    <property type="entry name" value="HOX"/>
    <property type="match status" value="1"/>
</dbReference>
<dbReference type="SMART" id="SM00234">
    <property type="entry name" value="START"/>
    <property type="match status" value="1"/>
</dbReference>
<dbReference type="SUPFAM" id="SSF55961">
    <property type="entry name" value="Bet v1-like"/>
    <property type="match status" value="2"/>
</dbReference>
<dbReference type="SUPFAM" id="SSF46689">
    <property type="entry name" value="Homeodomain-like"/>
    <property type="match status" value="1"/>
</dbReference>
<dbReference type="PROSITE" id="PS50071">
    <property type="entry name" value="HOMEOBOX_2"/>
    <property type="match status" value="1"/>
</dbReference>
<dbReference type="PROSITE" id="PS50848">
    <property type="entry name" value="START"/>
    <property type="match status" value="1"/>
</dbReference>
<feature type="chain" id="PRO_0000331732" description="Homeobox-leucine zipper protein HOX32">
    <location>
        <begin position="1"/>
        <end position="859"/>
    </location>
</feature>
<feature type="domain" description="START" evidence="4">
    <location>
        <begin position="171"/>
        <end position="393"/>
    </location>
</feature>
<feature type="DNA-binding region" description="Homeobox" evidence="3">
    <location>
        <begin position="29"/>
        <end position="92"/>
    </location>
</feature>
<feature type="region of interest" description="Disordered" evidence="5">
    <location>
        <begin position="7"/>
        <end position="31"/>
    </location>
</feature>
<feature type="region of interest" description="Disordered" evidence="5">
    <location>
        <begin position="146"/>
        <end position="172"/>
    </location>
</feature>
<feature type="coiled-coil region" evidence="2">
    <location>
        <begin position="100"/>
        <end position="129"/>
    </location>
</feature>
<feature type="compositionally biased region" description="Polar residues" evidence="5">
    <location>
        <begin position="146"/>
        <end position="164"/>
    </location>
</feature>
<gene>
    <name type="primary">HOX32</name>
    <name type="ordered locus">Os03g0640800</name>
    <name type="ordered locus">LOC_Os03g43930</name>
    <name type="ORF">B1394A07.10</name>
</gene>
<accession>Q6AST1</accession>
<accession>B7EUE5</accession>
<accession>Q6Q503</accession>
<sequence>MAAAMVAAVHGVGRQDRSSPGGGGAPQVDTGKYVRYTPEQVEALERVYGECPKPSSLRRQQLIRECPILSNIEPKQIKVWFQNRRCREKQRKEASRLQTVNRKLTAMNKLLMEENDRLQKQVSRLVYENGYMRQQLHNPSVATTDTSCESVVTSGQHHQQQNPAATRPQRDANNPAGLLAIAEETLAEFLSKATGTAVDWVQMVGMKPGPDSIGIIAVSHNCSGVAARACGLVSLEPTKVAEILKDRPSWYRDCRCVDVLHVIPTGNGGTIELIYMQTYAPTTLAAPRDFWILRYTSGLEDGSLVICERSLTQSTGGPSGPNTPNFVRAEVLPSGYLIRPCEGGGSMIHIVDHVDLDAWSVPEVLRPLYESPKILAQKMTIAALRHIRQIAHESSGEMPYGGGRQPAVLRTFSQRLSRGFNDAVNGFPDDGWSLMSSDGAEDVTIAFNSSPNKLVGSHVNSSQLFSAIGGGILCAKASMLLQNVPPALLVRFLREHRSEWADPGVDAYSAAALRASPYAVPGLRAGGFMGSQVILPLAHTLEHEEFLEVIRLEGHSLCHDEVVLSRDMYLLQLCSGVDENAAGACAQLVFAPIDESFADDAPLLPSGFRVIPLDGKTDAPSATRTLDLASTLEVGSGGTTRASSDTSSTCNTRSVLTIAFQFSYENHLRESVAAMARQYVRTVVASVQRVAMAIAPSRLGGQIETKNPPGSPEAHTLARWIGRSYRFHTGADLLRTDSQSTDSSLKAMWQHSDSIMCCSLKAAPVFTFANQAGLDMLETTLIALQDISLEKILDDDGRKALCTEFPKIMQQGFAYLPGGVCVSSMGRPVSYEQAVAWKVLSDDDTPHCLAFMFVNWSFV</sequence>
<comment type="function">
    <text evidence="1">Probable transcription factor.</text>
</comment>
<comment type="subcellular location">
    <subcellularLocation>
        <location evidence="7">Nucleus</location>
    </subcellularLocation>
</comment>
<comment type="tissue specificity">
    <text evidence="6">Expressed in seedlings, roots, stems, leaf sheaths and blades and panicles.</text>
</comment>
<comment type="similarity">
    <text evidence="7">Belongs to the HD-ZIP homeobox family. Class III subfamily.</text>
</comment>